<gene>
    <name type="primary">GVP36</name>
    <name type="ordered locus">YIL041W</name>
</gene>
<proteinExistence type="evidence at protein level"/>
<organism>
    <name type="scientific">Saccharomyces cerevisiae (strain ATCC 204508 / S288c)</name>
    <name type="common">Baker's yeast</name>
    <dbReference type="NCBI Taxonomy" id="559292"/>
    <lineage>
        <taxon>Eukaryota</taxon>
        <taxon>Fungi</taxon>
        <taxon>Dikarya</taxon>
        <taxon>Ascomycota</taxon>
        <taxon>Saccharomycotina</taxon>
        <taxon>Saccharomycetes</taxon>
        <taxon>Saccharomycetales</taxon>
        <taxon>Saccharomycetaceae</taxon>
        <taxon>Saccharomyces</taxon>
    </lineage>
</organism>
<sequence>MSFNAFASSLSKKLQEISTSVSEKTQELPSLAQSTQRMVQERLGQVTDISQLPREYTELEDKVDTIKLIYNHFLGVTAIYENGSYDYPKYINESVNEFSRSVASKLTELTHATSASEAQNILVAPGPIKEPKTLNYALSKVALNSSECLNKMFPTEEQPLASALLQFSDVQAKIAQARIQQDTLIQTKFNKNLRERLSFEIGKADKCRKDVHSMRLRYDVARTNLANNKKPEKEASLRVQMETLEDQFAQVTEDATVCLQEVISHANFSEDLKELAKAQAEYFETSAGLMKEFLSNSFAEEPEAKPEVAEEEKPQTAISMNDEDDA</sequence>
<reference key="1">
    <citation type="journal article" date="1997" name="Nature">
        <title>The nucleotide sequence of Saccharomyces cerevisiae chromosome IX.</title>
        <authorList>
            <person name="Churcher C.M."/>
            <person name="Bowman S."/>
            <person name="Badcock K."/>
            <person name="Bankier A.T."/>
            <person name="Brown D."/>
            <person name="Chillingworth T."/>
            <person name="Connor R."/>
            <person name="Devlin K."/>
            <person name="Gentles S."/>
            <person name="Hamlin N."/>
            <person name="Harris D.E."/>
            <person name="Horsnell T."/>
            <person name="Hunt S."/>
            <person name="Jagels K."/>
            <person name="Jones M."/>
            <person name="Lye G."/>
            <person name="Moule S."/>
            <person name="Odell C."/>
            <person name="Pearson D."/>
            <person name="Rajandream M.A."/>
            <person name="Rice P."/>
            <person name="Rowley N."/>
            <person name="Skelton J."/>
            <person name="Smith V."/>
            <person name="Walsh S.V."/>
            <person name="Whitehead S."/>
            <person name="Barrell B.G."/>
        </authorList>
    </citation>
    <scope>NUCLEOTIDE SEQUENCE [LARGE SCALE GENOMIC DNA]</scope>
    <source>
        <strain>ATCC 204508 / S288c</strain>
    </source>
</reference>
<reference key="2">
    <citation type="journal article" date="2014" name="G3 (Bethesda)">
        <title>The reference genome sequence of Saccharomyces cerevisiae: Then and now.</title>
        <authorList>
            <person name="Engel S.R."/>
            <person name="Dietrich F.S."/>
            <person name="Fisk D.G."/>
            <person name="Binkley G."/>
            <person name="Balakrishnan R."/>
            <person name="Costanzo M.C."/>
            <person name="Dwight S.S."/>
            <person name="Hitz B.C."/>
            <person name="Karra K."/>
            <person name="Nash R.S."/>
            <person name="Weng S."/>
            <person name="Wong E.D."/>
            <person name="Lloyd P."/>
            <person name="Skrzypek M.S."/>
            <person name="Miyasato S.R."/>
            <person name="Simison M."/>
            <person name="Cherry J.M."/>
        </authorList>
    </citation>
    <scope>GENOME REANNOTATION</scope>
    <source>
        <strain>ATCC 204508 / S288c</strain>
    </source>
</reference>
<reference key="3">
    <citation type="submission" date="2005-06" db="UniProtKB">
        <authorList>
            <person name="Bienvenut W.V."/>
            <person name="Peters C."/>
        </authorList>
    </citation>
    <scope>PROTEIN SEQUENCE OF 25-37; 90-100 AND 141-151</scope>
    <scope>IDENTIFICATION BY MASS SPECTROMETRY</scope>
</reference>
<reference key="4">
    <citation type="journal article" date="2003" name="Nature">
        <title>Global analysis of protein expression in yeast.</title>
        <authorList>
            <person name="Ghaemmaghami S."/>
            <person name="Huh W.-K."/>
            <person name="Bower K."/>
            <person name="Howson R.W."/>
            <person name="Belle A."/>
            <person name="Dephoure N."/>
            <person name="O'Shea E.K."/>
            <person name="Weissman J.S."/>
        </authorList>
    </citation>
    <scope>LEVEL OF PROTEIN EXPRESSION [LARGE SCALE ANALYSIS]</scope>
</reference>
<reference key="5">
    <citation type="journal article" date="2003" name="Nat. Biotechnol.">
        <title>A proteomics approach to understanding protein ubiquitination.</title>
        <authorList>
            <person name="Peng J."/>
            <person name="Schwartz D."/>
            <person name="Elias J.E."/>
            <person name="Thoreen C.C."/>
            <person name="Cheng D."/>
            <person name="Marsischky G."/>
            <person name="Roelofs J."/>
            <person name="Finley D."/>
            <person name="Gygi S.P."/>
        </authorList>
    </citation>
    <scope>UBIQUITINATION [LARGE SCALE ANALYSIS] AT LYS-305 AND LYS-313</scope>
    <scope>IDENTIFICATION BY MASS SPECTROMETRY</scope>
    <source>
        <strain>SUB592</strain>
    </source>
</reference>
<reference key="6">
    <citation type="journal article" date="2005" name="Mol. Cell. Biol.">
        <title>Immunoisolation of the yeast Golgi subcompartments and characterization of a novel membrane protein, Svp26, discovered in the Sed5-containing compartments.</title>
        <authorList>
            <person name="Inadome H."/>
            <person name="Noda Y."/>
            <person name="Adachi H."/>
            <person name="Yoda K."/>
        </authorList>
    </citation>
    <scope>SUBCELLULAR LOCATION</scope>
</reference>
<reference key="7">
    <citation type="journal article" date="2005" name="Mol. Cell. Proteomics">
        <title>Quantitative phosphoproteomics applied to the yeast pheromone signaling pathway.</title>
        <authorList>
            <person name="Gruhler A."/>
            <person name="Olsen J.V."/>
            <person name="Mohammed S."/>
            <person name="Mortensen P."/>
            <person name="Faergeman N.J."/>
            <person name="Mann M."/>
            <person name="Jensen O.N."/>
        </authorList>
    </citation>
    <scope>ACETYLATION [LARGE SCALE ANALYSIS] AT SER-2</scope>
    <scope>PHOSPHORYLATION [LARGE SCALE ANALYSIS] AT SER-2</scope>
    <scope>CLEAVAGE OF INITIATOR METHIONINE [LARGE SCALE ANALYSIS]</scope>
    <scope>IDENTIFICATION BY MASS SPECTROMETRY [LARGE SCALE ANALYSIS]</scope>
    <source>
        <strain>YAL6B</strain>
    </source>
</reference>
<reference key="8">
    <citation type="journal article" date="2007" name="J. Proteome Res.">
        <title>Large-scale phosphorylation analysis of alpha-factor-arrested Saccharomyces cerevisiae.</title>
        <authorList>
            <person name="Li X."/>
            <person name="Gerber S.A."/>
            <person name="Rudner A.D."/>
            <person name="Beausoleil S.A."/>
            <person name="Haas W."/>
            <person name="Villen J."/>
            <person name="Elias J.E."/>
            <person name="Gygi S.P."/>
        </authorList>
    </citation>
    <scope>PHOSPHORYLATION [LARGE SCALE ANALYSIS] AT SER-319</scope>
    <scope>IDENTIFICATION BY MASS SPECTROMETRY [LARGE SCALE ANALYSIS]</scope>
    <source>
        <strain>ADR376</strain>
    </source>
</reference>
<reference key="9">
    <citation type="journal article" date="2008" name="Mol. Cell. Proteomics">
        <title>A multidimensional chromatography technology for in-depth phosphoproteome analysis.</title>
        <authorList>
            <person name="Albuquerque C.P."/>
            <person name="Smolka M.B."/>
            <person name="Payne S.H."/>
            <person name="Bafna V."/>
            <person name="Eng J."/>
            <person name="Zhou H."/>
        </authorList>
    </citation>
    <scope>PHOSPHORYLATION [LARGE SCALE ANALYSIS] AT SER-319</scope>
    <scope>IDENTIFICATION BY MASS SPECTROMETRY [LARGE SCALE ANALYSIS]</scope>
</reference>
<reference key="10">
    <citation type="journal article" date="2009" name="Science">
        <title>Global analysis of Cdk1 substrate phosphorylation sites provides insights into evolution.</title>
        <authorList>
            <person name="Holt L.J."/>
            <person name="Tuch B.B."/>
            <person name="Villen J."/>
            <person name="Johnson A.D."/>
            <person name="Gygi S.P."/>
            <person name="Morgan D.O."/>
        </authorList>
    </citation>
    <scope>PHOSPHORYLATION [LARGE SCALE ANALYSIS] AT SER-319</scope>
    <scope>IDENTIFICATION BY MASS SPECTROMETRY [LARGE SCALE ANALYSIS]</scope>
</reference>
<reference key="11">
    <citation type="journal article" date="2012" name="Proteomics">
        <title>Sites of ubiquitin attachment in Saccharomyces cerevisiae.</title>
        <authorList>
            <person name="Starita L.M."/>
            <person name="Lo R.S."/>
            <person name="Eng J.K."/>
            <person name="von Haller P.D."/>
            <person name="Fields S."/>
        </authorList>
    </citation>
    <scope>UBIQUITINATION [LARGE SCALE ANALYSIS] AT LYS-13; LYS-305 AND LYS-313</scope>
    <scope>IDENTIFICATION BY MASS SPECTROMETRY [LARGE SCALE ANALYSIS]</scope>
</reference>
<dbReference type="EMBL" id="Z46861">
    <property type="protein sequence ID" value="CAA86910.1"/>
    <property type="molecule type" value="Genomic_DNA"/>
</dbReference>
<dbReference type="EMBL" id="BK006942">
    <property type="protein sequence ID" value="DAA08507.1"/>
    <property type="molecule type" value="Genomic_DNA"/>
</dbReference>
<dbReference type="PIR" id="S49937">
    <property type="entry name" value="S49937"/>
</dbReference>
<dbReference type="RefSeq" id="NP_012223.3">
    <property type="nucleotide sequence ID" value="NM_001179391.3"/>
</dbReference>
<dbReference type="SMR" id="P40531"/>
<dbReference type="BioGRID" id="34949">
    <property type="interactions" value="155"/>
</dbReference>
<dbReference type="DIP" id="DIP-7930N"/>
<dbReference type="FunCoup" id="P40531">
    <property type="interactions" value="109"/>
</dbReference>
<dbReference type="IntAct" id="P40531">
    <property type="interactions" value="5"/>
</dbReference>
<dbReference type="MINT" id="P40531"/>
<dbReference type="STRING" id="4932.YIL041W"/>
<dbReference type="iPTMnet" id="P40531"/>
<dbReference type="PaxDb" id="4932-YIL041W"/>
<dbReference type="PeptideAtlas" id="P40531"/>
<dbReference type="EnsemblFungi" id="YIL041W_mRNA">
    <property type="protein sequence ID" value="YIL041W"/>
    <property type="gene ID" value="YIL041W"/>
</dbReference>
<dbReference type="GeneID" id="854770"/>
<dbReference type="KEGG" id="sce:YIL041W"/>
<dbReference type="AGR" id="SGD:S000001303"/>
<dbReference type="SGD" id="S000001303">
    <property type="gene designation" value="GVP36"/>
</dbReference>
<dbReference type="VEuPathDB" id="FungiDB:YIL041W"/>
<dbReference type="eggNOG" id="ENOG502QQ2V">
    <property type="taxonomic scope" value="Eukaryota"/>
</dbReference>
<dbReference type="HOGENOM" id="CLU_059017_0_0_1"/>
<dbReference type="InParanoid" id="P40531"/>
<dbReference type="OMA" id="NIMFATR"/>
<dbReference type="OrthoDB" id="5549748at2759"/>
<dbReference type="BioCyc" id="YEAST:G3O-31313-MONOMER"/>
<dbReference type="BioGRID-ORCS" id="854770">
    <property type="hits" value="4 hits in 10 CRISPR screens"/>
</dbReference>
<dbReference type="PRO" id="PR:P40531"/>
<dbReference type="Proteomes" id="UP000002311">
    <property type="component" value="Chromosome IX"/>
</dbReference>
<dbReference type="RNAct" id="P40531">
    <property type="molecule type" value="protein"/>
</dbReference>
<dbReference type="GO" id="GO:0005737">
    <property type="term" value="C:cytoplasm"/>
    <property type="evidence" value="ECO:0007005"/>
    <property type="project" value="SGD"/>
</dbReference>
<dbReference type="GO" id="GO:0005829">
    <property type="term" value="C:cytosol"/>
    <property type="evidence" value="ECO:0007005"/>
    <property type="project" value="SGD"/>
</dbReference>
<dbReference type="GO" id="GO:0000139">
    <property type="term" value="C:Golgi membrane"/>
    <property type="evidence" value="ECO:0000314"/>
    <property type="project" value="SGD"/>
</dbReference>
<dbReference type="GO" id="GO:0006897">
    <property type="term" value="P:endocytosis"/>
    <property type="evidence" value="ECO:0000315"/>
    <property type="project" value="SGD"/>
</dbReference>
<dbReference type="GO" id="GO:0030950">
    <property type="term" value="P:establishment or maintenance of actin cytoskeleton polarity"/>
    <property type="evidence" value="ECO:0000315"/>
    <property type="project" value="SGD"/>
</dbReference>
<dbReference type="GO" id="GO:0007033">
    <property type="term" value="P:vacuole organization"/>
    <property type="evidence" value="ECO:0000315"/>
    <property type="project" value="SGD"/>
</dbReference>
<dbReference type="CDD" id="cd07600">
    <property type="entry name" value="BAR_Gvp36"/>
    <property type="match status" value="1"/>
</dbReference>
<dbReference type="FunFam" id="1.20.1270.60:FF:000092">
    <property type="entry name" value="Gvp36p"/>
    <property type="match status" value="1"/>
</dbReference>
<dbReference type="Gene3D" id="1.20.1270.60">
    <property type="entry name" value="Arfaptin homology (AH) domain/BAR domain"/>
    <property type="match status" value="1"/>
</dbReference>
<dbReference type="InterPro" id="IPR027267">
    <property type="entry name" value="AH/BAR_dom_sf"/>
</dbReference>
<dbReference type="InterPro" id="IPR018859">
    <property type="entry name" value="BAR_dom-cont"/>
</dbReference>
<dbReference type="Pfam" id="PF10455">
    <property type="entry name" value="BAR_2"/>
    <property type="match status" value="1"/>
</dbReference>
<dbReference type="SUPFAM" id="SSF103657">
    <property type="entry name" value="BAR/IMD domain-like"/>
    <property type="match status" value="1"/>
</dbReference>
<protein>
    <recommendedName>
        <fullName>Protein GVP36</fullName>
    </recommendedName>
    <alternativeName>
        <fullName>36 kDa Golgi vesicle protein</fullName>
    </alternativeName>
</protein>
<comment type="subcellular location">
    <subcellularLocation>
        <location evidence="3">Golgi apparatus membrane</location>
        <topology evidence="3">Peripheral membrane protein</topology>
    </subcellularLocation>
</comment>
<comment type="miscellaneous">
    <text evidence="2">Present with 7721 molecules/cell in log phase SD medium.</text>
</comment>
<evidence type="ECO:0000256" key="1">
    <source>
        <dbReference type="SAM" id="MobiDB-lite"/>
    </source>
</evidence>
<evidence type="ECO:0000269" key="2">
    <source>
    </source>
</evidence>
<evidence type="ECO:0000269" key="3">
    <source>
    </source>
</evidence>
<evidence type="ECO:0007744" key="4">
    <source>
    </source>
</evidence>
<evidence type="ECO:0007744" key="5">
    <source>
    </source>
</evidence>
<evidence type="ECO:0007744" key="6">
    <source>
    </source>
</evidence>
<evidence type="ECO:0007744" key="7">
    <source>
    </source>
</evidence>
<evidence type="ECO:0007744" key="8">
    <source>
    </source>
</evidence>
<accession>P40531</accession>
<accession>D6VVP1</accession>
<keyword id="KW-0007">Acetylation</keyword>
<keyword id="KW-0903">Direct protein sequencing</keyword>
<keyword id="KW-0333">Golgi apparatus</keyword>
<keyword id="KW-1017">Isopeptide bond</keyword>
<keyword id="KW-0472">Membrane</keyword>
<keyword id="KW-0597">Phosphoprotein</keyword>
<keyword id="KW-1185">Reference proteome</keyword>
<keyword id="KW-0832">Ubl conjugation</keyword>
<feature type="initiator methionine" description="Removed" evidence="4">
    <location>
        <position position="1"/>
    </location>
</feature>
<feature type="chain" id="PRO_0000083881" description="Protein GVP36">
    <location>
        <begin position="2"/>
        <end position="326"/>
    </location>
</feature>
<feature type="region of interest" description="Disordered" evidence="1">
    <location>
        <begin position="299"/>
        <end position="326"/>
    </location>
</feature>
<feature type="compositionally biased region" description="Basic and acidic residues" evidence="1">
    <location>
        <begin position="302"/>
        <end position="314"/>
    </location>
</feature>
<feature type="modified residue" description="N-acetylserine" evidence="4">
    <location>
        <position position="2"/>
    </location>
</feature>
<feature type="modified residue" description="Phosphoserine" evidence="4">
    <location>
        <position position="2"/>
    </location>
</feature>
<feature type="modified residue" description="Phosphoserine" evidence="5 6 7">
    <location>
        <position position="319"/>
    </location>
</feature>
<feature type="cross-link" description="Glycyl lysine isopeptide (Lys-Gly) (interchain with G-Cter in ubiquitin)" evidence="8">
    <location>
        <position position="13"/>
    </location>
</feature>
<feature type="cross-link" description="Glycyl lysine isopeptide (Lys-Gly) (interchain with G-Cter in ubiquitin)" evidence="8">
    <location>
        <position position="305"/>
    </location>
</feature>
<feature type="cross-link" description="Glycyl lysine isopeptide (Lys-Gly) (interchain with G-Cter in ubiquitin)" evidence="8">
    <location>
        <position position="313"/>
    </location>
</feature>
<name>GVP36_YEAST</name>